<sequence length="35" mass="3917">MTFAELGMAFWHDLAAPVIAGILASMIVNWLNKRK</sequence>
<evidence type="ECO:0000250" key="1">
    <source>
        <dbReference type="UniProtKB" id="P0DPD0"/>
    </source>
</evidence>
<evidence type="ECO:0000255" key="2"/>
<evidence type="ECO:0000269" key="3">
    <source>
    </source>
</evidence>
<evidence type="ECO:0000269" key="4">
    <source>
    </source>
</evidence>
<evidence type="ECO:0000305" key="5"/>
<evidence type="ECO:0007829" key="6">
    <source>
        <dbReference type="PDB" id="5LBJ"/>
    </source>
</evidence>
<protein>
    <recommendedName>
        <fullName>Small toxic polypeptide LdrD</fullName>
    </recommendedName>
</protein>
<name>LDRD_ECOLI</name>
<reference key="1">
    <citation type="journal article" date="1997" name="Science">
        <title>The complete genome sequence of Escherichia coli K-12.</title>
        <authorList>
            <person name="Blattner F.R."/>
            <person name="Plunkett G. III"/>
            <person name="Bloch C.A."/>
            <person name="Perna N.T."/>
            <person name="Burland V."/>
            <person name="Riley M."/>
            <person name="Collado-Vides J."/>
            <person name="Glasner J.D."/>
            <person name="Rode C.K."/>
            <person name="Mayhew G.F."/>
            <person name="Gregor J."/>
            <person name="Davis N.W."/>
            <person name="Kirkpatrick H.A."/>
            <person name="Goeden M.A."/>
            <person name="Rose D.J."/>
            <person name="Mau B."/>
            <person name="Shao Y."/>
        </authorList>
    </citation>
    <scope>NUCLEOTIDE SEQUENCE [LARGE SCALE GENOMIC DNA]</scope>
    <source>
        <strain>K12 / MG1655 / ATCC 47076</strain>
    </source>
</reference>
<reference key="2">
    <citation type="journal article" date="2006" name="Mol. Syst. Biol.">
        <title>Highly accurate genome sequences of Escherichia coli K-12 strains MG1655 and W3110.</title>
        <authorList>
            <person name="Hayashi K."/>
            <person name="Morooka N."/>
            <person name="Yamamoto Y."/>
            <person name="Fujita K."/>
            <person name="Isono K."/>
            <person name="Choi S."/>
            <person name="Ohtsubo E."/>
            <person name="Baba T."/>
            <person name="Wanner B.L."/>
            <person name="Mori H."/>
            <person name="Horiuchi T."/>
        </authorList>
    </citation>
    <scope>NUCLEOTIDE SEQUENCE [LARGE SCALE GENOMIC DNA]</scope>
    <source>
        <strain>K12 / W3110 / ATCC 27325 / DSM 5911</strain>
    </source>
</reference>
<reference key="3">
    <citation type="journal article" date="2002" name="Mol. Microbiol.">
        <title>Molecular characterization of long direct repeat (LDR) sequences expressing a stable mRNA encoding for a 35-amino-acid cell-killing peptide and a cis-encoded small antisense RNA in Escherichia coli.</title>
        <authorList>
            <person name="Kawano M."/>
            <person name="Oshima T."/>
            <person name="Kasai H."/>
            <person name="Mori H."/>
        </authorList>
    </citation>
    <scope>IDENTIFICATION</scope>
    <scope>FUNCTION</scope>
    <scope>PROBABLE INDUCTION</scope>
</reference>
<reference key="4">
    <citation type="journal article" date="2008" name="Mol. Microbiol.">
        <title>Repression of small toxic protein synthesis by the Sib and OhsC small RNAs.</title>
        <authorList>
            <person name="Fozo E.M."/>
            <person name="Kawano M."/>
            <person name="Fontaine F."/>
            <person name="Kaya Y."/>
            <person name="Mendieta K.S."/>
            <person name="Jones K.L."/>
            <person name="Ocampo A."/>
            <person name="Rudd K.E."/>
            <person name="Storz G."/>
        </authorList>
    </citation>
    <scope>FUNCTION</scope>
    <source>
        <strain>K12 / MG1655 / ATCC 47076</strain>
    </source>
</reference>
<gene>
    <name type="primary">ldrD</name>
    <name type="ordered locus">b4453</name>
    <name type="ordered locus">JW5966</name>
</gene>
<proteinExistence type="evidence at protein level"/>
<organism>
    <name type="scientific">Escherichia coli (strain K12)</name>
    <dbReference type="NCBI Taxonomy" id="83333"/>
    <lineage>
        <taxon>Bacteria</taxon>
        <taxon>Pseudomonadati</taxon>
        <taxon>Pseudomonadota</taxon>
        <taxon>Gammaproteobacteria</taxon>
        <taxon>Enterobacterales</taxon>
        <taxon>Enterobacteriaceae</taxon>
        <taxon>Escherichia</taxon>
    </lineage>
</organism>
<accession>Q6BF25</accession>
<accession>Q2M7K0</accession>
<keyword id="KW-0002">3D-structure</keyword>
<keyword id="KW-0997">Cell inner membrane</keyword>
<keyword id="KW-1003">Cell membrane</keyword>
<keyword id="KW-0472">Membrane</keyword>
<keyword id="KW-1185">Reference proteome</keyword>
<keyword id="KW-1277">Toxin-antitoxin system</keyword>
<keyword id="KW-0812">Transmembrane</keyword>
<keyword id="KW-1133">Transmembrane helix</keyword>
<feature type="peptide" id="PRO_0000230294" description="Small toxic polypeptide LdrD">
    <location>
        <begin position="1"/>
        <end position="35"/>
    </location>
</feature>
<feature type="transmembrane region" description="Helical" evidence="2">
    <location>
        <begin position="10"/>
        <end position="32"/>
    </location>
</feature>
<feature type="helix" evidence="6">
    <location>
        <begin position="3"/>
        <end position="34"/>
    </location>
</feature>
<comment type="function">
    <text evidence="1 3 4">Toxic component of a type I toxin-antitoxin (TA) system. Overexpression causes rapid cell killing and nucleoid condensation of the host cell (PubMed:12123448). Overexpression induces stress-response and a number of membrane protein genes. May inhibit ATP synthesis due to its insertion in the cell inner membrane (By similarity).</text>
</comment>
<comment type="subcellular location">
    <subcellularLocation>
        <location evidence="2">Cell inner membrane</location>
        <topology evidence="2">Single-pass membrane protein</topology>
    </subcellularLocation>
</comment>
<comment type="induction">
    <text evidence="5">Expression of the proteinaceous toxin is controlled by an antisense sRNA, in this case RdlD. Only a few of these TA systems have been mechanistically characterized; the mechanisms used to control expression of the toxin gene are not necessarily the same (Probable).</text>
</comment>
<comment type="similarity">
    <text evidence="5">Belongs to the Ldr toxic peptide family.</text>
</comment>
<dbReference type="EMBL" id="U00096">
    <property type="protein sequence ID" value="AAT48189.1"/>
    <property type="molecule type" value="Genomic_DNA"/>
</dbReference>
<dbReference type="EMBL" id="AP009048">
    <property type="protein sequence ID" value="BAE77756.1"/>
    <property type="molecule type" value="Genomic_DNA"/>
</dbReference>
<dbReference type="RefSeq" id="WP_000141634.1">
    <property type="nucleotide sequence ID" value="NZ_SSZK01000039.1"/>
</dbReference>
<dbReference type="RefSeq" id="YP_026227.1">
    <property type="nucleotide sequence ID" value="NC_000913.3"/>
</dbReference>
<dbReference type="PDB" id="5LBJ">
    <property type="method" value="NMR"/>
    <property type="chains" value="A=1-35"/>
</dbReference>
<dbReference type="PDBsum" id="5LBJ"/>
<dbReference type="SMR" id="Q6BF25"/>
<dbReference type="BioGRID" id="4260912">
    <property type="interactions" value="12"/>
</dbReference>
<dbReference type="FunCoup" id="Q6BF25">
    <property type="interactions" value="157"/>
</dbReference>
<dbReference type="STRING" id="511145.b4453"/>
<dbReference type="TCDB" id="1.C.64.1.13">
    <property type="family name" value="the fst toxin (fst) family"/>
</dbReference>
<dbReference type="PaxDb" id="511145-b4453"/>
<dbReference type="EnsemblBacteria" id="AAT48189">
    <property type="protein sequence ID" value="AAT48189"/>
    <property type="gene ID" value="b4453"/>
</dbReference>
<dbReference type="GeneID" id="2847730"/>
<dbReference type="KEGG" id="ecj:JW5966"/>
<dbReference type="KEGG" id="eco:b4453"/>
<dbReference type="KEGG" id="ecoc:C3026_19170"/>
<dbReference type="PATRIC" id="fig|1411691.4.peg.3177"/>
<dbReference type="HOGENOM" id="CLU_212598_1_0_6"/>
<dbReference type="InParanoid" id="Q6BF25"/>
<dbReference type="OrthoDB" id="6588978at2"/>
<dbReference type="PhylomeDB" id="Q6BF25"/>
<dbReference type="BioCyc" id="EcoCyc:MONOMER0-921"/>
<dbReference type="PRO" id="PR:Q6BF25"/>
<dbReference type="Proteomes" id="UP000000625">
    <property type="component" value="Chromosome"/>
</dbReference>
<dbReference type="GO" id="GO:0005886">
    <property type="term" value="C:plasma membrane"/>
    <property type="evidence" value="ECO:0007669"/>
    <property type="project" value="UniProtKB-SubCell"/>
</dbReference>
<dbReference type="InterPro" id="IPR025253">
    <property type="entry name" value="Toxin_Ldr"/>
</dbReference>
<dbReference type="Pfam" id="PF13940">
    <property type="entry name" value="Ldr_toxin"/>
    <property type="match status" value="1"/>
</dbReference>